<feature type="chain" id="PRO_0000147968" description="Phosphoglucosamine mutase">
    <location>
        <begin position="1"/>
        <end position="451"/>
    </location>
</feature>
<feature type="active site" description="Phosphoserine intermediate" evidence="1">
    <location>
        <position position="102"/>
    </location>
</feature>
<feature type="binding site" description="via phosphate group" evidence="1">
    <location>
        <position position="102"/>
    </location>
    <ligand>
        <name>Mg(2+)</name>
        <dbReference type="ChEBI" id="CHEBI:18420"/>
    </ligand>
</feature>
<feature type="binding site" evidence="1">
    <location>
        <position position="242"/>
    </location>
    <ligand>
        <name>Mg(2+)</name>
        <dbReference type="ChEBI" id="CHEBI:18420"/>
    </ligand>
</feature>
<feature type="binding site" evidence="1">
    <location>
        <position position="244"/>
    </location>
    <ligand>
        <name>Mg(2+)</name>
        <dbReference type="ChEBI" id="CHEBI:18420"/>
    </ligand>
</feature>
<feature type="binding site" evidence="1">
    <location>
        <position position="246"/>
    </location>
    <ligand>
        <name>Mg(2+)</name>
        <dbReference type="ChEBI" id="CHEBI:18420"/>
    </ligand>
</feature>
<feature type="modified residue" description="Phosphoserine" evidence="1">
    <location>
        <position position="102"/>
    </location>
</feature>
<keyword id="KW-0413">Isomerase</keyword>
<keyword id="KW-0460">Magnesium</keyword>
<keyword id="KW-0479">Metal-binding</keyword>
<keyword id="KW-0597">Phosphoprotein</keyword>
<keyword id="KW-1185">Reference proteome</keyword>
<comment type="function">
    <text evidence="1">Catalyzes the conversion of glucosamine-6-phosphate to glucosamine-1-phosphate.</text>
</comment>
<comment type="catalytic activity">
    <reaction evidence="1">
        <text>alpha-D-glucosamine 1-phosphate = D-glucosamine 6-phosphate</text>
        <dbReference type="Rhea" id="RHEA:23424"/>
        <dbReference type="ChEBI" id="CHEBI:58516"/>
        <dbReference type="ChEBI" id="CHEBI:58725"/>
        <dbReference type="EC" id="5.4.2.10"/>
    </reaction>
</comment>
<comment type="cofactor">
    <cofactor evidence="1">
        <name>Mg(2+)</name>
        <dbReference type="ChEBI" id="CHEBI:18420"/>
    </cofactor>
    <text evidence="1">Binds 1 Mg(2+) ion per subunit.</text>
</comment>
<comment type="PTM">
    <text evidence="1">Activated by phosphorylation.</text>
</comment>
<comment type="similarity">
    <text evidence="1">Belongs to the phosphohexose mutase family.</text>
</comment>
<accession>Q49ZA7</accession>
<dbReference type="EC" id="5.4.2.10" evidence="1"/>
<dbReference type="EMBL" id="AP008934">
    <property type="protein sequence ID" value="BAE17869.1"/>
    <property type="molecule type" value="Genomic_DNA"/>
</dbReference>
<dbReference type="RefSeq" id="WP_002482671.1">
    <property type="nucleotide sequence ID" value="NZ_MTGA01000032.1"/>
</dbReference>
<dbReference type="SMR" id="Q49ZA7"/>
<dbReference type="GeneID" id="66866880"/>
<dbReference type="KEGG" id="ssp:SSP0724"/>
<dbReference type="eggNOG" id="COG1109">
    <property type="taxonomic scope" value="Bacteria"/>
</dbReference>
<dbReference type="HOGENOM" id="CLU_016950_7_0_9"/>
<dbReference type="OrthoDB" id="9806956at2"/>
<dbReference type="Proteomes" id="UP000006371">
    <property type="component" value="Chromosome"/>
</dbReference>
<dbReference type="GO" id="GO:0005829">
    <property type="term" value="C:cytosol"/>
    <property type="evidence" value="ECO:0007669"/>
    <property type="project" value="TreeGrafter"/>
</dbReference>
<dbReference type="GO" id="GO:0000287">
    <property type="term" value="F:magnesium ion binding"/>
    <property type="evidence" value="ECO:0007669"/>
    <property type="project" value="UniProtKB-UniRule"/>
</dbReference>
<dbReference type="GO" id="GO:0008966">
    <property type="term" value="F:phosphoglucosamine mutase activity"/>
    <property type="evidence" value="ECO:0007669"/>
    <property type="project" value="UniProtKB-UniRule"/>
</dbReference>
<dbReference type="GO" id="GO:0004615">
    <property type="term" value="F:phosphomannomutase activity"/>
    <property type="evidence" value="ECO:0007669"/>
    <property type="project" value="TreeGrafter"/>
</dbReference>
<dbReference type="GO" id="GO:0005975">
    <property type="term" value="P:carbohydrate metabolic process"/>
    <property type="evidence" value="ECO:0007669"/>
    <property type="project" value="InterPro"/>
</dbReference>
<dbReference type="GO" id="GO:0009252">
    <property type="term" value="P:peptidoglycan biosynthetic process"/>
    <property type="evidence" value="ECO:0007669"/>
    <property type="project" value="TreeGrafter"/>
</dbReference>
<dbReference type="GO" id="GO:0006048">
    <property type="term" value="P:UDP-N-acetylglucosamine biosynthetic process"/>
    <property type="evidence" value="ECO:0007669"/>
    <property type="project" value="TreeGrafter"/>
</dbReference>
<dbReference type="CDD" id="cd05802">
    <property type="entry name" value="GlmM"/>
    <property type="match status" value="1"/>
</dbReference>
<dbReference type="FunFam" id="3.30.310.50:FF:000001">
    <property type="entry name" value="Phosphoglucosamine mutase"/>
    <property type="match status" value="1"/>
</dbReference>
<dbReference type="FunFam" id="3.40.120.10:FF:000001">
    <property type="entry name" value="Phosphoglucosamine mutase"/>
    <property type="match status" value="1"/>
</dbReference>
<dbReference type="FunFam" id="3.40.120.10:FF:000002">
    <property type="entry name" value="Phosphoglucosamine mutase"/>
    <property type="match status" value="1"/>
</dbReference>
<dbReference type="Gene3D" id="3.40.120.10">
    <property type="entry name" value="Alpha-D-Glucose-1,6-Bisphosphate, subunit A, domain 3"/>
    <property type="match status" value="3"/>
</dbReference>
<dbReference type="Gene3D" id="3.30.310.50">
    <property type="entry name" value="Alpha-D-phosphohexomutase, C-terminal domain"/>
    <property type="match status" value="1"/>
</dbReference>
<dbReference type="HAMAP" id="MF_01554_B">
    <property type="entry name" value="GlmM_B"/>
    <property type="match status" value="1"/>
</dbReference>
<dbReference type="InterPro" id="IPR005844">
    <property type="entry name" value="A-D-PHexomutase_a/b/a-I"/>
</dbReference>
<dbReference type="InterPro" id="IPR016055">
    <property type="entry name" value="A-D-PHexomutase_a/b/a-I/II/III"/>
</dbReference>
<dbReference type="InterPro" id="IPR005845">
    <property type="entry name" value="A-D-PHexomutase_a/b/a-II"/>
</dbReference>
<dbReference type="InterPro" id="IPR005846">
    <property type="entry name" value="A-D-PHexomutase_a/b/a-III"/>
</dbReference>
<dbReference type="InterPro" id="IPR005843">
    <property type="entry name" value="A-D-PHexomutase_C"/>
</dbReference>
<dbReference type="InterPro" id="IPR036900">
    <property type="entry name" value="A-D-PHexomutase_C_sf"/>
</dbReference>
<dbReference type="InterPro" id="IPR016066">
    <property type="entry name" value="A-D-PHexomutase_CS"/>
</dbReference>
<dbReference type="InterPro" id="IPR005841">
    <property type="entry name" value="Alpha-D-phosphohexomutase_SF"/>
</dbReference>
<dbReference type="InterPro" id="IPR006352">
    <property type="entry name" value="GlmM_bact"/>
</dbReference>
<dbReference type="InterPro" id="IPR050060">
    <property type="entry name" value="Phosphoglucosamine_mutase"/>
</dbReference>
<dbReference type="NCBIfam" id="TIGR01455">
    <property type="entry name" value="glmM"/>
    <property type="match status" value="1"/>
</dbReference>
<dbReference type="NCBIfam" id="NF008139">
    <property type="entry name" value="PRK10887.1"/>
    <property type="match status" value="1"/>
</dbReference>
<dbReference type="PANTHER" id="PTHR42946:SF1">
    <property type="entry name" value="PHOSPHOGLUCOMUTASE (ALPHA-D-GLUCOSE-1,6-BISPHOSPHATE-DEPENDENT)"/>
    <property type="match status" value="1"/>
</dbReference>
<dbReference type="PANTHER" id="PTHR42946">
    <property type="entry name" value="PHOSPHOHEXOSE MUTASE"/>
    <property type="match status" value="1"/>
</dbReference>
<dbReference type="Pfam" id="PF02878">
    <property type="entry name" value="PGM_PMM_I"/>
    <property type="match status" value="1"/>
</dbReference>
<dbReference type="Pfam" id="PF02879">
    <property type="entry name" value="PGM_PMM_II"/>
    <property type="match status" value="1"/>
</dbReference>
<dbReference type="Pfam" id="PF02880">
    <property type="entry name" value="PGM_PMM_III"/>
    <property type="match status" value="1"/>
</dbReference>
<dbReference type="Pfam" id="PF00408">
    <property type="entry name" value="PGM_PMM_IV"/>
    <property type="match status" value="1"/>
</dbReference>
<dbReference type="PRINTS" id="PR00509">
    <property type="entry name" value="PGMPMM"/>
</dbReference>
<dbReference type="SUPFAM" id="SSF55957">
    <property type="entry name" value="Phosphoglucomutase, C-terminal domain"/>
    <property type="match status" value="1"/>
</dbReference>
<dbReference type="SUPFAM" id="SSF53738">
    <property type="entry name" value="Phosphoglucomutase, first 3 domains"/>
    <property type="match status" value="3"/>
</dbReference>
<dbReference type="PROSITE" id="PS00710">
    <property type="entry name" value="PGM_PMM"/>
    <property type="match status" value="1"/>
</dbReference>
<proteinExistence type="inferred from homology"/>
<protein>
    <recommendedName>
        <fullName evidence="1">Phosphoglucosamine mutase</fullName>
        <ecNumber evidence="1">5.4.2.10</ecNumber>
    </recommendedName>
</protein>
<gene>
    <name evidence="1" type="primary">glmM</name>
    <name type="ordered locus">SSP0724</name>
</gene>
<organism>
    <name type="scientific">Staphylococcus saprophyticus subsp. saprophyticus (strain ATCC 15305 / DSM 20229 / NCIMB 8711 / NCTC 7292 / S-41)</name>
    <dbReference type="NCBI Taxonomy" id="342451"/>
    <lineage>
        <taxon>Bacteria</taxon>
        <taxon>Bacillati</taxon>
        <taxon>Bacillota</taxon>
        <taxon>Bacilli</taxon>
        <taxon>Bacillales</taxon>
        <taxon>Staphylococcaceae</taxon>
        <taxon>Staphylococcus</taxon>
    </lineage>
</organism>
<reference key="1">
    <citation type="journal article" date="2005" name="Proc. Natl. Acad. Sci. U.S.A.">
        <title>Whole genome sequence of Staphylococcus saprophyticus reveals the pathogenesis of uncomplicated urinary tract infection.</title>
        <authorList>
            <person name="Kuroda M."/>
            <person name="Yamashita A."/>
            <person name="Hirakawa H."/>
            <person name="Kumano M."/>
            <person name="Morikawa K."/>
            <person name="Higashide M."/>
            <person name="Maruyama A."/>
            <person name="Inose Y."/>
            <person name="Matoba K."/>
            <person name="Toh H."/>
            <person name="Kuhara S."/>
            <person name="Hattori M."/>
            <person name="Ohta T."/>
        </authorList>
    </citation>
    <scope>NUCLEOTIDE SEQUENCE [LARGE SCALE GENOMIC DNA]</scope>
    <source>
        <strain>ATCC 15305 / DSM 20229 / NCIMB 8711 / NCTC 7292 / S-41</strain>
    </source>
</reference>
<sequence>MAKYFGTDGVRGVANKELTPELAFKLGRYGGYVLAHNEGEKHPKVLVGRDTRVSGEMLESALIAGLISIGAEVMRLGVISTPGVAYLTREMEADLGVMISASHNPVPDNGIKFFGSDGFKLSDDQEQEIEHLLDQDNPDLPRPVGEDIVHYSDYFEGAQKYISYLKSTVDVDLAGMKIALDGAHGSTSSLAPFLFGDLEADTVTIGCNPNGYNINQEVGSTHPESLAKVVVESECDFGLAFDGDGDRLIAIDEKGNIVDGDQIMFIIGQAMSKNQELNNNMIVSTVMSNLGFYKALENEGIQSNKTKVGDRYVVEEMRRGNYNLGGEQSGHIVLMDYNTTGDGLLTGVQLASIIKMTGKSLSQLTSQMKKYPQSLVNVRVTDKYRVEENIDVQEIMTKVEVEMNGEGRILVRPSGTEPLVRVMVEAATDEDAQRYANTIAEVVQDKMGLDN</sequence>
<evidence type="ECO:0000255" key="1">
    <source>
        <dbReference type="HAMAP-Rule" id="MF_01554"/>
    </source>
</evidence>
<name>GLMM_STAS1</name>